<keyword id="KW-0963">Cytoplasm</keyword>
<keyword id="KW-0269">Exonuclease</keyword>
<keyword id="KW-0378">Hydrolase</keyword>
<keyword id="KW-0540">Nuclease</keyword>
<organism>
    <name type="scientific">Escherichia coli (strain UTI89 / UPEC)</name>
    <dbReference type="NCBI Taxonomy" id="364106"/>
    <lineage>
        <taxon>Bacteria</taxon>
        <taxon>Pseudomonadati</taxon>
        <taxon>Pseudomonadota</taxon>
        <taxon>Gammaproteobacteria</taxon>
        <taxon>Enterobacterales</taxon>
        <taxon>Enterobacteriaceae</taxon>
        <taxon>Escherichia</taxon>
    </lineage>
</organism>
<accession>Q1R8M7</accession>
<gene>
    <name evidence="1" type="primary">xseA</name>
    <name type="ordered locus">UTI89_C2827</name>
</gene>
<sequence length="458" mass="51554">MLPSQSPAIFTVSRLNQTVRLLLEHEMGQVWISGEISNFTQPASGHWYFTLKDDTAQVRCAMFRNSNRRVTFRPQHGQQVLVRANITLYEPRGDYQIIVESMQPAGEGLLQLKYEQLKAKLQAEGLFDLQYKKSLPSPAHCVGVITSKTGAALHDILHVLKRRDPSLPVIIYPTAVQGDDAPGQIVRAIELANQRNECDVLIVGRGGGSLEDLWSFNDERVARAIFASRIPIVSAVGHETDVTIADFVADLRAPTPSAAAEVVSRNQQELLRQVQSTHQRLEMAMDYYLANRTRRFTQIHHRLQQQHPQLRLARQQTMLERLQKRMSFALESQLKRAGQQQQRLTRQLVQQNPQSRIHRAQTRIQQLEYRLAETLRAQLSATRERFGNAVTHLEAVSPLSTLARGYSVTSAADGAVLKQVKQVKVGETLTTRLGDGVVISEVSAVTKTRKSRKKTSNP</sequence>
<dbReference type="EC" id="3.1.11.6" evidence="1"/>
<dbReference type="EMBL" id="CP000243">
    <property type="protein sequence ID" value="ABE08287.1"/>
    <property type="molecule type" value="Genomic_DNA"/>
</dbReference>
<dbReference type="RefSeq" id="WP_000937882.1">
    <property type="nucleotide sequence ID" value="NZ_CP064825.1"/>
</dbReference>
<dbReference type="SMR" id="Q1R8M7"/>
<dbReference type="KEGG" id="eci:UTI89_C2827"/>
<dbReference type="HOGENOM" id="CLU_023625_3_1_6"/>
<dbReference type="Proteomes" id="UP000001952">
    <property type="component" value="Chromosome"/>
</dbReference>
<dbReference type="GO" id="GO:0005737">
    <property type="term" value="C:cytoplasm"/>
    <property type="evidence" value="ECO:0007669"/>
    <property type="project" value="UniProtKB-SubCell"/>
</dbReference>
<dbReference type="GO" id="GO:0009318">
    <property type="term" value="C:exodeoxyribonuclease VII complex"/>
    <property type="evidence" value="ECO:0007669"/>
    <property type="project" value="InterPro"/>
</dbReference>
<dbReference type="GO" id="GO:0008855">
    <property type="term" value="F:exodeoxyribonuclease VII activity"/>
    <property type="evidence" value="ECO:0007669"/>
    <property type="project" value="UniProtKB-UniRule"/>
</dbReference>
<dbReference type="GO" id="GO:0003676">
    <property type="term" value="F:nucleic acid binding"/>
    <property type="evidence" value="ECO:0007669"/>
    <property type="project" value="InterPro"/>
</dbReference>
<dbReference type="GO" id="GO:0006308">
    <property type="term" value="P:DNA catabolic process"/>
    <property type="evidence" value="ECO:0007669"/>
    <property type="project" value="UniProtKB-UniRule"/>
</dbReference>
<dbReference type="CDD" id="cd04489">
    <property type="entry name" value="ExoVII_LU_OBF"/>
    <property type="match status" value="1"/>
</dbReference>
<dbReference type="HAMAP" id="MF_00378">
    <property type="entry name" value="Exonuc_7_L"/>
    <property type="match status" value="1"/>
</dbReference>
<dbReference type="InterPro" id="IPR003753">
    <property type="entry name" value="Exonuc_VII_L"/>
</dbReference>
<dbReference type="InterPro" id="IPR020579">
    <property type="entry name" value="Exonuc_VII_lsu_C"/>
</dbReference>
<dbReference type="InterPro" id="IPR025824">
    <property type="entry name" value="OB-fold_nuc-bd_dom"/>
</dbReference>
<dbReference type="NCBIfam" id="TIGR00237">
    <property type="entry name" value="xseA"/>
    <property type="match status" value="1"/>
</dbReference>
<dbReference type="PANTHER" id="PTHR30008">
    <property type="entry name" value="EXODEOXYRIBONUCLEASE 7 LARGE SUBUNIT"/>
    <property type="match status" value="1"/>
</dbReference>
<dbReference type="PANTHER" id="PTHR30008:SF0">
    <property type="entry name" value="EXODEOXYRIBONUCLEASE 7 LARGE SUBUNIT"/>
    <property type="match status" value="1"/>
</dbReference>
<dbReference type="Pfam" id="PF02601">
    <property type="entry name" value="Exonuc_VII_L"/>
    <property type="match status" value="1"/>
</dbReference>
<dbReference type="Pfam" id="PF13742">
    <property type="entry name" value="tRNA_anti_2"/>
    <property type="match status" value="1"/>
</dbReference>
<evidence type="ECO:0000255" key="1">
    <source>
        <dbReference type="HAMAP-Rule" id="MF_00378"/>
    </source>
</evidence>
<proteinExistence type="inferred from homology"/>
<feature type="chain" id="PRO_0000273656" description="Exodeoxyribonuclease 7 large subunit">
    <location>
        <begin position="1"/>
        <end position="458"/>
    </location>
</feature>
<reference key="1">
    <citation type="journal article" date="2006" name="Proc. Natl. Acad. Sci. U.S.A.">
        <title>Identification of genes subject to positive selection in uropathogenic strains of Escherichia coli: a comparative genomics approach.</title>
        <authorList>
            <person name="Chen S.L."/>
            <person name="Hung C.-S."/>
            <person name="Xu J."/>
            <person name="Reigstad C.S."/>
            <person name="Magrini V."/>
            <person name="Sabo A."/>
            <person name="Blasiar D."/>
            <person name="Bieri T."/>
            <person name="Meyer R.R."/>
            <person name="Ozersky P."/>
            <person name="Armstrong J.R."/>
            <person name="Fulton R.S."/>
            <person name="Latreille J.P."/>
            <person name="Spieth J."/>
            <person name="Hooton T.M."/>
            <person name="Mardis E.R."/>
            <person name="Hultgren S.J."/>
            <person name="Gordon J.I."/>
        </authorList>
    </citation>
    <scope>NUCLEOTIDE SEQUENCE [LARGE SCALE GENOMIC DNA]</scope>
    <source>
        <strain>UTI89 / UPEC</strain>
    </source>
</reference>
<comment type="function">
    <text evidence="1">Bidirectionally degrades single-stranded DNA into large acid-insoluble oligonucleotides, which are then degraded further into small acid-soluble oligonucleotides.</text>
</comment>
<comment type="catalytic activity">
    <reaction evidence="1">
        <text>Exonucleolytic cleavage in either 5'- to 3'- or 3'- to 5'-direction to yield nucleoside 5'-phosphates.</text>
        <dbReference type="EC" id="3.1.11.6"/>
    </reaction>
</comment>
<comment type="subunit">
    <text evidence="1">Heterooligomer composed of large and small subunits.</text>
</comment>
<comment type="subcellular location">
    <subcellularLocation>
        <location evidence="1">Cytoplasm</location>
    </subcellularLocation>
</comment>
<comment type="similarity">
    <text evidence="1">Belongs to the XseA family.</text>
</comment>
<name>EX7L_ECOUT</name>
<protein>
    <recommendedName>
        <fullName evidence="1">Exodeoxyribonuclease 7 large subunit</fullName>
        <ecNumber evidence="1">3.1.11.6</ecNumber>
    </recommendedName>
    <alternativeName>
        <fullName evidence="1">Exodeoxyribonuclease VII large subunit</fullName>
        <shortName evidence="1">Exonuclease VII large subunit</shortName>
    </alternativeName>
</protein>